<comment type="function">
    <text evidence="8">Receptor with tyrosine-protein kinase activity. Functions as a pH sensing receptor which is activated by increased extracellular pH. Activates an intracellular signaling pathway that involves IRS1 and AKT1/PKB.</text>
</comment>
<comment type="catalytic activity">
    <reaction evidence="5">
        <text>L-tyrosyl-[protein] + ATP = O-phospho-L-tyrosyl-[protein] + ADP + H(+)</text>
        <dbReference type="Rhea" id="RHEA:10596"/>
        <dbReference type="Rhea" id="RHEA-COMP:10136"/>
        <dbReference type="Rhea" id="RHEA-COMP:20101"/>
        <dbReference type="ChEBI" id="CHEBI:15378"/>
        <dbReference type="ChEBI" id="CHEBI:30616"/>
        <dbReference type="ChEBI" id="CHEBI:46858"/>
        <dbReference type="ChEBI" id="CHEBI:61978"/>
        <dbReference type="ChEBI" id="CHEBI:456216"/>
        <dbReference type="EC" id="2.7.10.1"/>
    </reaction>
</comment>
<comment type="subunit">
    <text>Probable tetramer of 2 alpha and 2 beta chains linked by disulfide bonds. The alpha chains contribute to the formation of the ligand-binding domain, while the beta chains carry the kinase domain.</text>
</comment>
<comment type="interaction">
    <interactant intactId="EBI-6424336">
        <id>P14616</id>
    </interactant>
    <interactant intactId="EBI-352572">
        <id>P08238</id>
        <label>HSP90AB1</label>
    </interactant>
    <organismsDiffer>false</organismsDiffer>
    <experiments>4</experiments>
</comment>
<comment type="interaction">
    <interactant intactId="EBI-6424336">
        <id>P14616</id>
    </interactant>
    <interactant intactId="EBI-475899">
        <id>P06213</id>
        <label>INSR</label>
    </interactant>
    <organismsDiffer>false</organismsDiffer>
    <experiments>6</experiments>
</comment>
<comment type="interaction">
    <interactant intactId="EBI-6424336">
        <id>P14616</id>
    </interactant>
    <interactant intactId="EBI-16439278">
        <id>Q6FHY5</id>
        <label>MEOX2</label>
    </interactant>
    <organismsDiffer>false</organismsDiffer>
    <experiments>3</experiments>
</comment>
<comment type="subcellular location">
    <subcellularLocation>
        <location>Membrane</location>
        <topology>Single-pass type I membrane protein</topology>
    </subcellularLocation>
</comment>
<comment type="domain">
    <text>The extracellular domain is required for sensing alterations in external pH.</text>
</comment>
<comment type="PTM">
    <text>Autophosphorylated on tyrosine residues between pH 7.9 and pH 10.5.</text>
</comment>
<comment type="similarity">
    <text evidence="3">Belongs to the protein kinase superfamily. Tyr protein kinase family. Insulin receptor subfamily.</text>
</comment>
<feature type="signal peptide" evidence="2">
    <location>
        <begin position="1"/>
        <end position="26"/>
    </location>
</feature>
<feature type="chain" id="PRO_0000016701" description="Insulin receptor-related protein">
    <location>
        <begin position="27"/>
        <end position="1297"/>
    </location>
</feature>
<feature type="chain" id="PRO_0000016702" description="Insulin receptor-related protein alpha chain" evidence="9">
    <location>
        <begin position="27"/>
        <end position="742"/>
    </location>
</feature>
<feature type="chain" id="PRO_0000016703" description="Insulin receptor-related protein beta chain" evidence="9">
    <location>
        <begin position="747"/>
        <end position="1297"/>
    </location>
</feature>
<feature type="topological domain" description="Extracellular" evidence="2">
    <location>
        <begin position="747"/>
        <end position="921"/>
    </location>
</feature>
<feature type="transmembrane region" description="Helical" evidence="2">
    <location>
        <begin position="922"/>
        <end position="943"/>
    </location>
</feature>
<feature type="topological domain" description="Cytoplasmic" evidence="2">
    <location>
        <begin position="944"/>
        <end position="1297"/>
    </location>
</feature>
<feature type="domain" description="Fibronectin type-III 1" evidence="4">
    <location>
        <begin position="483"/>
        <end position="603"/>
    </location>
</feature>
<feature type="domain" description="Fibronectin type-III 2" evidence="4">
    <location>
        <begin position="607"/>
        <end position="707"/>
    </location>
</feature>
<feature type="domain" description="Fibronectin type-III 3" evidence="4">
    <location>
        <begin position="818"/>
        <end position="913"/>
    </location>
</feature>
<feature type="domain" description="Protein kinase" evidence="3">
    <location>
        <begin position="979"/>
        <end position="1254"/>
    </location>
</feature>
<feature type="region of interest" description="Disordered" evidence="6">
    <location>
        <begin position="666"/>
        <end position="687"/>
    </location>
</feature>
<feature type="region of interest" description="Disordered" evidence="6">
    <location>
        <begin position="732"/>
        <end position="758"/>
    </location>
</feature>
<feature type="region of interest" description="Disordered" evidence="6">
    <location>
        <begin position="1267"/>
        <end position="1297"/>
    </location>
</feature>
<feature type="compositionally biased region" description="Acidic residues" evidence="6">
    <location>
        <begin position="675"/>
        <end position="685"/>
    </location>
</feature>
<feature type="compositionally biased region" description="Polar residues" evidence="6">
    <location>
        <begin position="1281"/>
        <end position="1297"/>
    </location>
</feature>
<feature type="active site" description="Proton acceptor" evidence="3 5">
    <location>
        <position position="1115"/>
    </location>
</feature>
<feature type="binding site" evidence="3">
    <location>
        <begin position="985"/>
        <end position="993"/>
    </location>
    <ligand>
        <name>ATP</name>
        <dbReference type="ChEBI" id="CHEBI:30616"/>
    </ligand>
</feature>
<feature type="binding site" evidence="3">
    <location>
        <position position="1013"/>
    </location>
    <ligand>
        <name>ATP</name>
        <dbReference type="ChEBI" id="CHEBI:30616"/>
    </ligand>
</feature>
<feature type="modified residue" description="Phosphotyrosine; by autocatalysis" evidence="9">
    <location>
        <position position="1145"/>
    </location>
</feature>
<feature type="modified residue" description="Phosphotyrosine; by autocatalysis" evidence="9">
    <location>
        <position position="1146"/>
    </location>
</feature>
<feature type="glycosylation site" description="N-linked (GlcNAc...) asparagine" evidence="2">
    <location>
        <position position="47"/>
    </location>
</feature>
<feature type="glycosylation site" description="N-linked (GlcNAc...) asparagine" evidence="2">
    <location>
        <position position="311"/>
    </location>
</feature>
<feature type="glycosylation site" description="N-linked (GlcNAc...) asparagine" evidence="2">
    <location>
        <position position="411"/>
    </location>
</feature>
<feature type="glycosylation site" description="N-linked (GlcNAc...) asparagine" evidence="2">
    <location>
        <position position="492"/>
    </location>
</feature>
<feature type="glycosylation site" description="N-linked (GlcNAc...) asparagine" evidence="2">
    <location>
        <position position="528"/>
    </location>
</feature>
<feature type="glycosylation site" description="N-linked (GlcNAc...) asparagine" evidence="2">
    <location>
        <position position="616"/>
    </location>
</feature>
<feature type="glycosylation site" description="N-linked (GlcNAc...) asparagine" evidence="2">
    <location>
        <position position="634"/>
    </location>
</feature>
<feature type="glycosylation site" description="N-linked (GlcNAc...) asparagine" evidence="2">
    <location>
        <position position="756"/>
    </location>
</feature>
<feature type="glycosylation site" description="N-linked (GlcNAc...) asparagine" evidence="2">
    <location>
        <position position="885"/>
    </location>
</feature>
<feature type="glycosylation site" description="N-linked (GlcNAc...) asparagine" evidence="2">
    <location>
        <position position="898"/>
    </location>
</feature>
<feature type="disulfide bond" evidence="1">
    <location>
        <begin position="214"/>
        <end position="222"/>
    </location>
</feature>
<feature type="disulfide bond" evidence="1">
    <location>
        <begin position="216"/>
        <end position="228"/>
    </location>
</feature>
<feature type="disulfide bond" evidence="1">
    <location>
        <begin position="229"/>
        <end position="237"/>
    </location>
</feature>
<feature type="disulfide bond" evidence="1">
    <location>
        <begin position="233"/>
        <end position="246"/>
    </location>
</feature>
<feature type="disulfide bond" evidence="1">
    <location>
        <begin position="249"/>
        <end position="258"/>
    </location>
</feature>
<feature type="disulfide bond" evidence="1">
    <location>
        <begin position="262"/>
        <end position="274"/>
    </location>
</feature>
<feature type="disulfide bond" evidence="1">
    <location>
        <begin position="280"/>
        <end position="300"/>
    </location>
</feature>
<feature type="disulfide bond" evidence="1">
    <location>
        <begin position="304"/>
        <end position="317"/>
    </location>
</feature>
<feature type="disulfide bond" evidence="1">
    <location>
        <begin position="320"/>
        <end position="324"/>
    </location>
</feature>
<feature type="disulfide bond" description="Interchain (between alpha and beta chains)" evidence="2">
    <location>
        <begin position="657"/>
        <end position="864"/>
    </location>
</feature>
<feature type="sequence variant" id="VAR_041434" description="In dbSNP:rs55757706." evidence="7">
    <original>A</original>
    <variation>E</variation>
    <location>
        <position position="127"/>
    </location>
</feature>
<feature type="sequence variant" id="VAR_041435" description="In dbSNP:rs55971900." evidence="7">
    <original>A</original>
    <variation>V</variation>
    <location>
        <position position="161"/>
    </location>
</feature>
<feature type="sequence variant" id="VAR_041436" description="In dbSNP:rs55951840." evidence="7">
    <original>R</original>
    <variation>H</variation>
    <location>
        <position position="244"/>
    </location>
</feature>
<feature type="sequence variant" id="VAR_041437" description="In dbSNP:rs56377825." evidence="7">
    <original>C</original>
    <variation>R</variation>
    <location>
        <position position="246"/>
    </location>
</feature>
<feature type="sequence variant" id="VAR_041438" description="In a lung adenocarcinoma sample; somatic mutation; dbSNP:rs770398033." evidence="7">
    <original>E</original>
    <variation>Q</variation>
    <location>
        <position position="278"/>
    </location>
</feature>
<feature type="sequence variant" id="VAR_041439" description="In dbSNP:rs56068937." evidence="7">
    <original>R</original>
    <variation>C</variation>
    <location>
        <position position="554"/>
    </location>
</feature>
<feature type="sequence variant" id="VAR_041440" description="In dbSNP:rs56252149." evidence="7">
    <original>P</original>
    <variation>L</variation>
    <location>
        <position position="928"/>
    </location>
</feature>
<feature type="sequence variant" id="VAR_041441" description="In a glioblastoma multiforme sample; somatic mutation." evidence="7">
    <original>G</original>
    <variation>E</variation>
    <location>
        <position position="1065"/>
    </location>
</feature>
<feature type="mutagenesis site" description="Abolishes autophosphorylation." evidence="8">
    <original>YY</original>
    <variation>FF</variation>
    <location>
        <begin position="1145"/>
        <end position="1146"/>
    </location>
</feature>
<feature type="strand" evidence="11">
    <location>
        <begin position="31"/>
        <end position="37"/>
    </location>
</feature>
<feature type="helix" evidence="11">
    <location>
        <begin position="40"/>
        <end position="45"/>
    </location>
</feature>
<feature type="strand" evidence="11">
    <location>
        <begin position="51"/>
        <end position="60"/>
    </location>
</feature>
<feature type="turn" evidence="11">
    <location>
        <begin position="65"/>
        <end position="70"/>
    </location>
</feature>
<feature type="strand" evidence="11">
    <location>
        <begin position="78"/>
        <end position="81"/>
    </location>
</feature>
<feature type="strand" evidence="11">
    <location>
        <begin position="83"/>
        <end position="88"/>
    </location>
</feature>
<feature type="turn" evidence="11">
    <location>
        <begin position="95"/>
        <end position="97"/>
    </location>
</feature>
<feature type="strand" evidence="11">
    <location>
        <begin position="113"/>
        <end position="119"/>
    </location>
</feature>
<feature type="strand" evidence="11">
    <location>
        <begin position="138"/>
        <end position="142"/>
    </location>
</feature>
<feature type="helix" evidence="11">
    <location>
        <begin position="155"/>
        <end position="157"/>
    </location>
</feature>
<feature type="helix" evidence="11">
    <location>
        <begin position="162"/>
        <end position="164"/>
    </location>
</feature>
<feature type="strand" evidence="11">
    <location>
        <begin position="169"/>
        <end position="171"/>
    </location>
</feature>
<feature type="turn" evidence="11">
    <location>
        <begin position="173"/>
        <end position="175"/>
    </location>
</feature>
<feature type="strand" evidence="11">
    <location>
        <begin position="181"/>
        <end position="185"/>
    </location>
</feature>
<feature type="strand" evidence="11">
    <location>
        <begin position="193"/>
        <end position="198"/>
    </location>
</feature>
<feature type="strand" evidence="11">
    <location>
        <begin position="200"/>
        <end position="202"/>
    </location>
</feature>
<feature type="strand" evidence="11">
    <location>
        <begin position="205"/>
        <end position="208"/>
    </location>
</feature>
<feature type="strand" evidence="11">
    <location>
        <begin position="215"/>
        <end position="219"/>
    </location>
</feature>
<feature type="strand" evidence="12">
    <location>
        <begin position="237"/>
        <end position="239"/>
    </location>
</feature>
<feature type="helix" evidence="11">
    <location>
        <begin position="243"/>
        <end position="245"/>
    </location>
</feature>
<feature type="strand" evidence="11">
    <location>
        <begin position="247"/>
        <end position="253"/>
    </location>
</feature>
<feature type="strand" evidence="11">
    <location>
        <begin position="258"/>
        <end position="261"/>
    </location>
</feature>
<feature type="strand" evidence="11">
    <location>
        <begin position="266"/>
        <end position="269"/>
    </location>
</feature>
<feature type="turn" evidence="11">
    <location>
        <begin position="270"/>
        <end position="272"/>
    </location>
</feature>
<feature type="strand" evidence="11">
    <location>
        <begin position="273"/>
        <end position="276"/>
    </location>
</feature>
<feature type="helix" evidence="11">
    <location>
        <begin position="277"/>
        <end position="282"/>
    </location>
</feature>
<feature type="helix" evidence="11">
    <location>
        <begin position="296"/>
        <end position="298"/>
    </location>
</feature>
<feature type="strand" evidence="11">
    <location>
        <begin position="301"/>
        <end position="303"/>
    </location>
</feature>
<feature type="strand" evidence="11">
    <location>
        <begin position="311"/>
        <end position="315"/>
    </location>
</feature>
<feature type="strand" evidence="11">
    <location>
        <begin position="321"/>
        <end position="323"/>
    </location>
</feature>
<feature type="strand" evidence="11">
    <location>
        <begin position="327"/>
        <end position="335"/>
    </location>
</feature>
<feature type="helix" evidence="11">
    <location>
        <begin position="338"/>
        <end position="341"/>
    </location>
</feature>
<feature type="helix" evidence="11">
    <location>
        <begin position="342"/>
        <end position="344"/>
    </location>
</feature>
<feature type="strand" evidence="11">
    <location>
        <begin position="349"/>
        <end position="356"/>
    </location>
</feature>
<feature type="helix" evidence="11">
    <location>
        <begin position="365"/>
        <end position="371"/>
    </location>
</feature>
<feature type="strand" evidence="11">
    <location>
        <begin position="372"/>
        <end position="374"/>
    </location>
</feature>
<feature type="strand" evidence="11">
    <location>
        <begin position="377"/>
        <end position="380"/>
    </location>
</feature>
<feature type="strand" evidence="11">
    <location>
        <begin position="382"/>
        <end position="386"/>
    </location>
</feature>
<feature type="turn" evidence="11">
    <location>
        <begin position="409"/>
        <end position="411"/>
    </location>
</feature>
<feature type="strand" evidence="11">
    <location>
        <begin position="412"/>
        <end position="417"/>
    </location>
</feature>
<feature type="strand" evidence="12">
    <location>
        <begin position="430"/>
        <end position="432"/>
    </location>
</feature>
<feature type="strand" evidence="11">
    <location>
        <begin position="437"/>
        <end position="444"/>
    </location>
</feature>
<feature type="helix" evidence="11">
    <location>
        <begin position="450"/>
        <end position="460"/>
    </location>
</feature>
<feature type="strand" evidence="13">
    <location>
        <begin position="463"/>
        <end position="465"/>
    </location>
</feature>
<feature type="turn" evidence="11">
    <location>
        <begin position="468"/>
        <end position="470"/>
    </location>
</feature>
<feature type="strand" evidence="11">
    <location>
        <begin position="473"/>
        <end position="476"/>
    </location>
</feature>
<feature type="strand" evidence="11">
    <location>
        <begin position="489"/>
        <end position="494"/>
    </location>
</feature>
<feature type="strand" evidence="11">
    <location>
        <begin position="496"/>
        <end position="503"/>
    </location>
</feature>
<feature type="strand" evidence="11">
    <location>
        <begin position="509"/>
        <end position="512"/>
    </location>
</feature>
<feature type="strand" evidence="11">
    <location>
        <begin position="516"/>
        <end position="523"/>
    </location>
</feature>
<feature type="strand" evidence="11">
    <location>
        <begin position="525"/>
        <end position="527"/>
    </location>
</feature>
<feature type="strand" evidence="11">
    <location>
        <begin position="547"/>
        <end position="549"/>
    </location>
</feature>
<feature type="strand" evidence="11">
    <location>
        <begin position="552"/>
        <end position="556"/>
    </location>
</feature>
<feature type="strand" evidence="11">
    <location>
        <begin position="560"/>
        <end position="564"/>
    </location>
</feature>
<feature type="strand" evidence="11">
    <location>
        <begin position="570"/>
        <end position="577"/>
    </location>
</feature>
<feature type="strand" evidence="11">
    <location>
        <begin position="596"/>
        <end position="599"/>
    </location>
</feature>
<feature type="strand" evidence="11">
    <location>
        <begin position="609"/>
        <end position="617"/>
    </location>
</feature>
<feature type="strand" evidence="11">
    <location>
        <begin position="620"/>
        <end position="626"/>
    </location>
</feature>
<feature type="strand" evidence="11">
    <location>
        <begin position="637"/>
        <end position="645"/>
    </location>
</feature>
<feature type="helix" evidence="11">
    <location>
        <begin position="649"/>
        <end position="651"/>
    </location>
</feature>
<feature type="strand" evidence="13">
    <location>
        <begin position="657"/>
        <end position="659"/>
    </location>
</feature>
<feature type="helix" evidence="11">
    <location>
        <begin position="704"/>
        <end position="718"/>
    </location>
</feature>
<feature type="strand" evidence="11">
    <location>
        <begin position="763"/>
        <end position="776"/>
    </location>
</feature>
<feature type="strand" evidence="11">
    <location>
        <begin position="782"/>
        <end position="792"/>
    </location>
</feature>
<feature type="strand" evidence="11">
    <location>
        <begin position="794"/>
        <end position="797"/>
    </location>
</feature>
<feature type="strand" evidence="11">
    <location>
        <begin position="805"/>
        <end position="808"/>
    </location>
</feature>
<feature type="turn" evidence="11">
    <location>
        <begin position="813"/>
        <end position="816"/>
    </location>
</feature>
<feature type="strand" evidence="13">
    <location>
        <begin position="823"/>
        <end position="827"/>
    </location>
</feature>
<feature type="turn" evidence="13">
    <location>
        <begin position="828"/>
        <end position="830"/>
    </location>
</feature>
<feature type="strand" evidence="11">
    <location>
        <begin position="832"/>
        <end position="835"/>
    </location>
</feature>
<feature type="strand" evidence="11">
    <location>
        <begin position="846"/>
        <end position="858"/>
    </location>
</feature>
<feature type="strand" evidence="11">
    <location>
        <begin position="861"/>
        <end position="866"/>
    </location>
</feature>
<feature type="helix" evidence="11">
    <location>
        <begin position="867"/>
        <end position="873"/>
    </location>
</feature>
<feature type="strand" evidence="11">
    <location>
        <begin position="874"/>
        <end position="878"/>
    </location>
</feature>
<feature type="strand" evidence="11">
    <location>
        <begin position="883"/>
        <end position="896"/>
    </location>
</feature>
<feature type="strand" evidence="11">
    <location>
        <begin position="905"/>
        <end position="909"/>
    </location>
</feature>
<feature type="helix" evidence="10">
    <location>
        <begin position="920"/>
        <end position="926"/>
    </location>
</feature>
<feature type="helix" evidence="10">
    <location>
        <begin position="928"/>
        <end position="946"/>
    </location>
</feature>
<organism>
    <name type="scientific">Homo sapiens</name>
    <name type="common">Human</name>
    <dbReference type="NCBI Taxonomy" id="9606"/>
    <lineage>
        <taxon>Eukaryota</taxon>
        <taxon>Metazoa</taxon>
        <taxon>Chordata</taxon>
        <taxon>Craniata</taxon>
        <taxon>Vertebrata</taxon>
        <taxon>Euteleostomi</taxon>
        <taxon>Mammalia</taxon>
        <taxon>Eutheria</taxon>
        <taxon>Euarchontoglires</taxon>
        <taxon>Primates</taxon>
        <taxon>Haplorrhini</taxon>
        <taxon>Catarrhini</taxon>
        <taxon>Hominidae</taxon>
        <taxon>Homo</taxon>
    </lineage>
</organism>
<keyword id="KW-0002">3D-structure</keyword>
<keyword id="KW-0067">ATP-binding</keyword>
<keyword id="KW-0165">Cleavage on pair of basic residues</keyword>
<keyword id="KW-1015">Disulfide bond</keyword>
<keyword id="KW-0325">Glycoprotein</keyword>
<keyword id="KW-0418">Kinase</keyword>
<keyword id="KW-0472">Membrane</keyword>
<keyword id="KW-0547">Nucleotide-binding</keyword>
<keyword id="KW-0597">Phosphoprotein</keyword>
<keyword id="KW-1267">Proteomics identification</keyword>
<keyword id="KW-0675">Receptor</keyword>
<keyword id="KW-1185">Reference proteome</keyword>
<keyword id="KW-0677">Repeat</keyword>
<keyword id="KW-0732">Signal</keyword>
<keyword id="KW-0808">Transferase</keyword>
<keyword id="KW-0812">Transmembrane</keyword>
<keyword id="KW-1133">Transmembrane helix</keyword>
<keyword id="KW-0829">Tyrosine-protein kinase</keyword>
<name>INSRR_HUMAN</name>
<protein>
    <recommendedName>
        <fullName>Insulin receptor-related protein</fullName>
        <shortName>IRR</shortName>
        <ecNumber>2.7.10.1</ecNumber>
    </recommendedName>
    <alternativeName>
        <fullName>IR-related receptor</fullName>
    </alternativeName>
    <component>
        <recommendedName>
            <fullName>Insulin receptor-related protein alpha chain</fullName>
        </recommendedName>
    </component>
    <component>
        <recommendedName>
            <fullName>Insulin receptor-related protein beta chain</fullName>
        </recommendedName>
    </component>
</protein>
<reference key="1">
    <citation type="journal article" date="1999" name="Horm. Metab. Res.">
        <title>Cloning and sequencing of the complete cDNA encoding the human insulin receptor related receptor.</title>
        <authorList>
            <person name="Haenze J."/>
            <person name="Berthold A."/>
            <person name="Klammt J."/>
            <person name="Gallaher B."/>
            <person name="Siebler T."/>
            <person name="Kratzsch J."/>
            <person name="Elmlinger M."/>
            <person name="Kiess W."/>
        </authorList>
    </citation>
    <scope>NUCLEOTIDE SEQUENCE [MRNA]</scope>
    <source>
        <tissue>Kidney</tissue>
    </source>
</reference>
<reference key="2">
    <citation type="journal article" date="2006" name="Nature">
        <title>The DNA sequence and biological annotation of human chromosome 1.</title>
        <authorList>
            <person name="Gregory S.G."/>
            <person name="Barlow K.F."/>
            <person name="McLay K.E."/>
            <person name="Kaul R."/>
            <person name="Swarbreck D."/>
            <person name="Dunham A."/>
            <person name="Scott C.E."/>
            <person name="Howe K.L."/>
            <person name="Woodfine K."/>
            <person name="Spencer C.C.A."/>
            <person name="Jones M.C."/>
            <person name="Gillson C."/>
            <person name="Searle S."/>
            <person name="Zhou Y."/>
            <person name="Kokocinski F."/>
            <person name="McDonald L."/>
            <person name="Evans R."/>
            <person name="Phillips K."/>
            <person name="Atkinson A."/>
            <person name="Cooper R."/>
            <person name="Jones C."/>
            <person name="Hall R.E."/>
            <person name="Andrews T.D."/>
            <person name="Lloyd C."/>
            <person name="Ainscough R."/>
            <person name="Almeida J.P."/>
            <person name="Ambrose K.D."/>
            <person name="Anderson F."/>
            <person name="Andrew R.W."/>
            <person name="Ashwell R.I.S."/>
            <person name="Aubin K."/>
            <person name="Babbage A.K."/>
            <person name="Bagguley C.L."/>
            <person name="Bailey J."/>
            <person name="Beasley H."/>
            <person name="Bethel G."/>
            <person name="Bird C.P."/>
            <person name="Bray-Allen S."/>
            <person name="Brown J.Y."/>
            <person name="Brown A.J."/>
            <person name="Buckley D."/>
            <person name="Burton J."/>
            <person name="Bye J."/>
            <person name="Carder C."/>
            <person name="Chapman J.C."/>
            <person name="Clark S.Y."/>
            <person name="Clarke G."/>
            <person name="Clee C."/>
            <person name="Cobley V."/>
            <person name="Collier R.E."/>
            <person name="Corby N."/>
            <person name="Coville G.J."/>
            <person name="Davies J."/>
            <person name="Deadman R."/>
            <person name="Dunn M."/>
            <person name="Earthrowl M."/>
            <person name="Ellington A.G."/>
            <person name="Errington H."/>
            <person name="Frankish A."/>
            <person name="Frankland J."/>
            <person name="French L."/>
            <person name="Garner P."/>
            <person name="Garnett J."/>
            <person name="Gay L."/>
            <person name="Ghori M.R.J."/>
            <person name="Gibson R."/>
            <person name="Gilby L.M."/>
            <person name="Gillett W."/>
            <person name="Glithero R.J."/>
            <person name="Grafham D.V."/>
            <person name="Griffiths C."/>
            <person name="Griffiths-Jones S."/>
            <person name="Grocock R."/>
            <person name="Hammond S."/>
            <person name="Harrison E.S.I."/>
            <person name="Hart E."/>
            <person name="Haugen E."/>
            <person name="Heath P.D."/>
            <person name="Holmes S."/>
            <person name="Holt K."/>
            <person name="Howden P.J."/>
            <person name="Hunt A.R."/>
            <person name="Hunt S.E."/>
            <person name="Hunter G."/>
            <person name="Isherwood J."/>
            <person name="James R."/>
            <person name="Johnson C."/>
            <person name="Johnson D."/>
            <person name="Joy A."/>
            <person name="Kay M."/>
            <person name="Kershaw J.K."/>
            <person name="Kibukawa M."/>
            <person name="Kimberley A.M."/>
            <person name="King A."/>
            <person name="Knights A.J."/>
            <person name="Lad H."/>
            <person name="Laird G."/>
            <person name="Lawlor S."/>
            <person name="Leongamornlert D.A."/>
            <person name="Lloyd D.M."/>
            <person name="Loveland J."/>
            <person name="Lovell J."/>
            <person name="Lush M.J."/>
            <person name="Lyne R."/>
            <person name="Martin S."/>
            <person name="Mashreghi-Mohammadi M."/>
            <person name="Matthews L."/>
            <person name="Matthews N.S.W."/>
            <person name="McLaren S."/>
            <person name="Milne S."/>
            <person name="Mistry S."/>
            <person name="Moore M.J.F."/>
            <person name="Nickerson T."/>
            <person name="O'Dell C.N."/>
            <person name="Oliver K."/>
            <person name="Palmeiri A."/>
            <person name="Palmer S.A."/>
            <person name="Parker A."/>
            <person name="Patel D."/>
            <person name="Pearce A.V."/>
            <person name="Peck A.I."/>
            <person name="Pelan S."/>
            <person name="Phelps K."/>
            <person name="Phillimore B.J."/>
            <person name="Plumb R."/>
            <person name="Rajan J."/>
            <person name="Raymond C."/>
            <person name="Rouse G."/>
            <person name="Saenphimmachak C."/>
            <person name="Sehra H.K."/>
            <person name="Sheridan E."/>
            <person name="Shownkeen R."/>
            <person name="Sims S."/>
            <person name="Skuce C.D."/>
            <person name="Smith M."/>
            <person name="Steward C."/>
            <person name="Subramanian S."/>
            <person name="Sycamore N."/>
            <person name="Tracey A."/>
            <person name="Tromans A."/>
            <person name="Van Helmond Z."/>
            <person name="Wall M."/>
            <person name="Wallis J.M."/>
            <person name="White S."/>
            <person name="Whitehead S.L."/>
            <person name="Wilkinson J.E."/>
            <person name="Willey D.L."/>
            <person name="Williams H."/>
            <person name="Wilming L."/>
            <person name="Wray P.W."/>
            <person name="Wu Z."/>
            <person name="Coulson A."/>
            <person name="Vaudin M."/>
            <person name="Sulston J.E."/>
            <person name="Durbin R.M."/>
            <person name="Hubbard T."/>
            <person name="Wooster R."/>
            <person name="Dunham I."/>
            <person name="Carter N.P."/>
            <person name="McVean G."/>
            <person name="Ross M.T."/>
            <person name="Harrow J."/>
            <person name="Olson M.V."/>
            <person name="Beck S."/>
            <person name="Rogers J."/>
            <person name="Bentley D.R."/>
        </authorList>
    </citation>
    <scope>NUCLEOTIDE SEQUENCE [LARGE SCALE GENOMIC DNA]</scope>
</reference>
<reference key="3">
    <citation type="submission" date="2005-09" db="EMBL/GenBank/DDBJ databases">
        <authorList>
            <person name="Mural R.J."/>
            <person name="Istrail S."/>
            <person name="Sutton G.G."/>
            <person name="Florea L."/>
            <person name="Halpern A.L."/>
            <person name="Mobarry C.M."/>
            <person name="Lippert R."/>
            <person name="Walenz B."/>
            <person name="Shatkay H."/>
            <person name="Dew I."/>
            <person name="Miller J.R."/>
            <person name="Flanigan M.J."/>
            <person name="Edwards N.J."/>
            <person name="Bolanos R."/>
            <person name="Fasulo D."/>
            <person name="Halldorsson B.V."/>
            <person name="Hannenhalli S."/>
            <person name="Turner R."/>
            <person name="Yooseph S."/>
            <person name="Lu F."/>
            <person name="Nusskern D.R."/>
            <person name="Shue B.C."/>
            <person name="Zheng X.H."/>
            <person name="Zhong F."/>
            <person name="Delcher A.L."/>
            <person name="Huson D.H."/>
            <person name="Kravitz S.A."/>
            <person name="Mouchard L."/>
            <person name="Reinert K."/>
            <person name="Remington K.A."/>
            <person name="Clark A.G."/>
            <person name="Waterman M.S."/>
            <person name="Eichler E.E."/>
            <person name="Adams M.D."/>
            <person name="Hunkapiller M.W."/>
            <person name="Myers E.W."/>
            <person name="Venter J.C."/>
        </authorList>
    </citation>
    <scope>NUCLEOTIDE SEQUENCE [LARGE SCALE GENOMIC DNA]</scope>
</reference>
<reference key="4">
    <citation type="journal article" date="1989" name="J. Biol. Chem.">
        <title>Primary structure of a putative receptor for a ligand of the insulin family.</title>
        <authorList>
            <person name="Shier P."/>
            <person name="Watt V.M."/>
        </authorList>
    </citation>
    <scope>NUCLEOTIDE SEQUENCE [MRNA] OF 30-1297</scope>
</reference>
<reference key="5">
    <citation type="journal article" date="2007" name="Nature">
        <title>Patterns of somatic mutation in human cancer genomes.</title>
        <authorList>
            <person name="Greenman C."/>
            <person name="Stephens P."/>
            <person name="Smith R."/>
            <person name="Dalgliesh G.L."/>
            <person name="Hunter C."/>
            <person name="Bignell G."/>
            <person name="Davies H."/>
            <person name="Teague J."/>
            <person name="Butler A."/>
            <person name="Stevens C."/>
            <person name="Edkins S."/>
            <person name="O'Meara S."/>
            <person name="Vastrik I."/>
            <person name="Schmidt E.E."/>
            <person name="Avis T."/>
            <person name="Barthorpe S."/>
            <person name="Bhamra G."/>
            <person name="Buck G."/>
            <person name="Choudhury B."/>
            <person name="Clements J."/>
            <person name="Cole J."/>
            <person name="Dicks E."/>
            <person name="Forbes S."/>
            <person name="Gray K."/>
            <person name="Halliday K."/>
            <person name="Harrison R."/>
            <person name="Hills K."/>
            <person name="Hinton J."/>
            <person name="Jenkinson A."/>
            <person name="Jones D."/>
            <person name="Menzies A."/>
            <person name="Mironenko T."/>
            <person name="Perry J."/>
            <person name="Raine K."/>
            <person name="Richardson D."/>
            <person name="Shepherd R."/>
            <person name="Small A."/>
            <person name="Tofts C."/>
            <person name="Varian J."/>
            <person name="Webb T."/>
            <person name="West S."/>
            <person name="Widaa S."/>
            <person name="Yates A."/>
            <person name="Cahill D.P."/>
            <person name="Louis D.N."/>
            <person name="Goldstraw P."/>
            <person name="Nicholson A.G."/>
            <person name="Brasseur F."/>
            <person name="Looijenga L."/>
            <person name="Weber B.L."/>
            <person name="Chiew Y.-E."/>
            <person name="DeFazio A."/>
            <person name="Greaves M.F."/>
            <person name="Green A.R."/>
            <person name="Campbell P."/>
            <person name="Birney E."/>
            <person name="Easton D.F."/>
            <person name="Chenevix-Trench G."/>
            <person name="Tan M.-H."/>
            <person name="Khoo S.K."/>
            <person name="Teh B.T."/>
            <person name="Yuen S.T."/>
            <person name="Leung S.Y."/>
            <person name="Wooster R."/>
            <person name="Futreal P.A."/>
            <person name="Stratton M.R."/>
        </authorList>
    </citation>
    <scope>VARIANTS [LARGE SCALE ANALYSIS] GLU-127; VAL-161; HIS-244; ARG-246; GLN-278; CYS-554; LEU-928 AND GLU-1065</scope>
</reference>
<reference key="6">
    <citation type="journal article" date="2011" name="Cell Metab.">
        <title>Insulin receptor-related receptor as an extracellular alkali sensor.</title>
        <authorList>
            <person name="Deyev I.E."/>
            <person name="Sohet F."/>
            <person name="Vassilenko K.P."/>
            <person name="Serova O.V."/>
            <person name="Popova N.V."/>
            <person name="Zozulya S.A."/>
            <person name="Burova E.B."/>
            <person name="Houillier P."/>
            <person name="Rzhevsky D.I."/>
            <person name="Berchatova A.A."/>
            <person name="Murashev A.N."/>
            <person name="Chugunov A.O."/>
            <person name="Efremov R.G."/>
            <person name="Nikol'sky N.N."/>
            <person name="Bertelli E."/>
            <person name="Eladari D."/>
            <person name="Petrenko A.G."/>
        </authorList>
    </citation>
    <scope>FUNCTION</scope>
    <scope>MUTAGENESIS OF 1145-TYR-TYR-1146</scope>
    <scope>AUTOPHOSPHORYLATION</scope>
</reference>
<proteinExistence type="evidence at protein level"/>
<accession>P14616</accession>
<accession>O60724</accession>
<accession>Q5VZS3</accession>
<sequence length="1297" mass="143720">MAVPSLWPWGACLPVIFLSLGFGLDTVEVCPSLDIRSEVAELRQLENCSVVEGHLQILLMFTATGEDFRGLSFPRLTQVTDYLLLFRVYGLESLRDLFPNLAVIRGTRLFLGYALVIFEMPHLRDVALPALGAVLRGAVRVEKNQELCHLSTIDWGLLQPAPGANHIVGNKLGEECADVCPGVLGAAGEPCAKTTFSGHTDYRCWTSSHCQRVCPCPHGMACTARGECCHTECLGGCSQPEDPRACVACRHLYFQGACLWACPPGTYQYESWRCVTAERCASLHSVPGRASTFGIHQGSCLAQCPSGFTRNSSSIFCHKCEGLCPKECKVGTKTIDSIQAAQDLVGCTHVEGSLILNLRQGYNLEPQLQHSLGLVETITGFLKIKHSFALVSLGFFKNLKLIRGDAMVDGNYTLYVLDNQNLQQLGSWVAAGLTIPVGKIYFAFNPRLCLEHIYRLEEVTGTRGRQNKAEINPRTNGDRAACQTRTLRFVSNVTEADRILLRWERYEPLEARDLLSFIVYYKESPFQNATEHVGPDACGTQSWNLLDVELPLSRTQEPGVTLASLKPWTQYAVFVRAITLTTEEDSPHQGAQSPIVYLRTLPAAPTVPQDVISTSNSSSHLLVRWKPPTQRNGNLTYYLVLWQRLAEDGDLYLNDYCHRGLRLPTSNNDPRFDGEDGDPEAEMESDCCPCQHPPPGQVLPPLEAQEASFQKKFENFLHNAITIPISPWKVTSINKSPQRDSGRHRRAAGPLRLGGNSSDFEIQEDKVPRERAVLSGLRHFTEYRIDIHACNHAAHTVGCSAATFVFARTMPHREADGIPGKVAWEASSKNSVLLRWLEPPDPNGLILKYEIKYRRLGEEATVLCVSRLRYAKFGGVHLALLPPGNYSARVRATSLAGNGSWTDSVAFYILGPEEEDAGGLHVLLTATPVGLTLLIVLAALGFFYGKKRNRTLYASVNPEYFSASDMYVPDEWEVPREQISIIRELGQGSFGMVYEGLARGLEAGEESTPVALKTVNELASPRECIEFLKEASVMKAFKCHHVVRLLGVVSQGQPTLVIMELMTRGDLKSHLRSLRPEAENNPGLPQPALGEMIQMAGEIADGMAYLAANKFVHRDLAARNCMVSQDFTVKIGDFGMTRDVYETDYYRKGGKGLLPVRWMAPESLKDGIFTTHSDVWSFGVVLWEIVTLAEQPYQGLSNEQVLKFVMDGGVLEELEGCPLQLQELMSRCWQPNPRLRPSFTHILDSIQEELRPSFRLLSFYYSPECRGARGSLPTTDAEPDSSPTPRDCSPQNGGPGH</sequence>
<evidence type="ECO:0000250" key="1"/>
<evidence type="ECO:0000255" key="2"/>
<evidence type="ECO:0000255" key="3">
    <source>
        <dbReference type="PROSITE-ProRule" id="PRU00159"/>
    </source>
</evidence>
<evidence type="ECO:0000255" key="4">
    <source>
        <dbReference type="PROSITE-ProRule" id="PRU00316"/>
    </source>
</evidence>
<evidence type="ECO:0000255" key="5">
    <source>
        <dbReference type="PROSITE-ProRule" id="PRU10028"/>
    </source>
</evidence>
<evidence type="ECO:0000256" key="6">
    <source>
        <dbReference type="SAM" id="MobiDB-lite"/>
    </source>
</evidence>
<evidence type="ECO:0000269" key="7">
    <source>
    </source>
</evidence>
<evidence type="ECO:0000269" key="8">
    <source>
    </source>
</evidence>
<evidence type="ECO:0000305" key="9"/>
<evidence type="ECO:0007829" key="10">
    <source>
        <dbReference type="PDB" id="7PL4"/>
    </source>
</evidence>
<evidence type="ECO:0007829" key="11">
    <source>
        <dbReference type="PDB" id="7TYJ"/>
    </source>
</evidence>
<evidence type="ECO:0007829" key="12">
    <source>
        <dbReference type="PDB" id="7TYK"/>
    </source>
</evidence>
<evidence type="ECO:0007829" key="13">
    <source>
        <dbReference type="PDB" id="7TYM"/>
    </source>
</evidence>
<gene>
    <name type="primary">INSRR</name>
    <name type="synonym">IRR</name>
</gene>
<dbReference type="EC" id="2.7.10.1"/>
<dbReference type="EMBL" id="AF064078">
    <property type="protein sequence ID" value="AAC17167.1"/>
    <property type="molecule type" value="mRNA"/>
</dbReference>
<dbReference type="EMBL" id="AL158169">
    <property type="status" value="NOT_ANNOTATED_CDS"/>
    <property type="molecule type" value="Genomic_DNA"/>
</dbReference>
<dbReference type="EMBL" id="CH471121">
    <property type="protein sequence ID" value="EAW52903.1"/>
    <property type="molecule type" value="Genomic_DNA"/>
</dbReference>
<dbReference type="EMBL" id="J05046">
    <property type="protein sequence ID" value="AAC31759.1"/>
    <property type="molecule type" value="mRNA"/>
</dbReference>
<dbReference type="CCDS" id="CCDS1160.1"/>
<dbReference type="PIR" id="B36502">
    <property type="entry name" value="B36502"/>
</dbReference>
<dbReference type="RefSeq" id="NP_055030.1">
    <property type="nucleotide sequence ID" value="NM_014215.3"/>
</dbReference>
<dbReference type="PDB" id="7PL4">
    <property type="method" value="NMR"/>
    <property type="chains" value="A=918-948"/>
</dbReference>
<dbReference type="PDB" id="7TYJ">
    <property type="method" value="EM"/>
    <property type="resolution" value="3.30 A"/>
    <property type="chains" value="A/B=1-1297"/>
</dbReference>
<dbReference type="PDB" id="7TYK">
    <property type="method" value="EM"/>
    <property type="resolution" value="3.50 A"/>
    <property type="chains" value="A/B=1-1297"/>
</dbReference>
<dbReference type="PDB" id="7TYM">
    <property type="method" value="EM"/>
    <property type="resolution" value="3.40 A"/>
    <property type="chains" value="A/B=1-1297"/>
</dbReference>
<dbReference type="PDBsum" id="7PL4"/>
<dbReference type="PDBsum" id="7TYJ"/>
<dbReference type="PDBsum" id="7TYK"/>
<dbReference type="PDBsum" id="7TYM"/>
<dbReference type="EMDB" id="EMD-26181"/>
<dbReference type="EMDB" id="EMD-26183"/>
<dbReference type="EMDB" id="EMD-26185"/>
<dbReference type="SASBDB" id="P14616"/>
<dbReference type="SMR" id="P14616"/>
<dbReference type="BioGRID" id="109856">
    <property type="interactions" value="97"/>
</dbReference>
<dbReference type="FunCoup" id="P14616">
    <property type="interactions" value="135"/>
</dbReference>
<dbReference type="IntAct" id="P14616">
    <property type="interactions" value="82"/>
</dbReference>
<dbReference type="MINT" id="P14616"/>
<dbReference type="STRING" id="9606.ENSP00000357178"/>
<dbReference type="BindingDB" id="P14616"/>
<dbReference type="ChEMBL" id="CHEMBL5483"/>
<dbReference type="DrugBank" id="DB12010">
    <property type="generic name" value="Fostamatinib"/>
</dbReference>
<dbReference type="DrugCentral" id="P14616"/>
<dbReference type="GuidetoPHARMACOLOGY" id="1802"/>
<dbReference type="GlyCosmos" id="P14616">
    <property type="glycosylation" value="10 sites, No reported glycans"/>
</dbReference>
<dbReference type="GlyGen" id="P14616">
    <property type="glycosylation" value="12 sites"/>
</dbReference>
<dbReference type="iPTMnet" id="P14616"/>
<dbReference type="PhosphoSitePlus" id="P14616"/>
<dbReference type="BioMuta" id="INSRR"/>
<dbReference type="DMDM" id="12644000"/>
<dbReference type="jPOST" id="P14616"/>
<dbReference type="MassIVE" id="P14616"/>
<dbReference type="PaxDb" id="9606-ENSP00000357178"/>
<dbReference type="PeptideAtlas" id="P14616"/>
<dbReference type="Antibodypedia" id="20446">
    <property type="antibodies" value="387 antibodies from 34 providers"/>
</dbReference>
<dbReference type="DNASU" id="3645"/>
<dbReference type="Ensembl" id="ENST00000368195.4">
    <property type="protein sequence ID" value="ENSP00000357178.3"/>
    <property type="gene ID" value="ENSG00000027644.5"/>
</dbReference>
<dbReference type="GeneID" id="3645"/>
<dbReference type="KEGG" id="hsa:3645"/>
<dbReference type="MANE-Select" id="ENST00000368195.4">
    <property type="protein sequence ID" value="ENSP00000357178.3"/>
    <property type="RefSeq nucleotide sequence ID" value="NM_014215.3"/>
    <property type="RefSeq protein sequence ID" value="NP_055030.1"/>
</dbReference>
<dbReference type="UCSC" id="uc010pht.3">
    <property type="organism name" value="human"/>
</dbReference>
<dbReference type="AGR" id="HGNC:6093"/>
<dbReference type="CTD" id="3645"/>
<dbReference type="DisGeNET" id="3645"/>
<dbReference type="GeneCards" id="INSRR"/>
<dbReference type="HGNC" id="HGNC:6093">
    <property type="gene designation" value="INSRR"/>
</dbReference>
<dbReference type="HPA" id="ENSG00000027644">
    <property type="expression patterns" value="Tissue enhanced (kidney, testis)"/>
</dbReference>
<dbReference type="MIM" id="147671">
    <property type="type" value="gene"/>
</dbReference>
<dbReference type="neXtProt" id="NX_P14616"/>
<dbReference type="OpenTargets" id="ENSG00000027644"/>
<dbReference type="PharmGKB" id="PA29899"/>
<dbReference type="VEuPathDB" id="HostDB:ENSG00000027644"/>
<dbReference type="eggNOG" id="KOG1095">
    <property type="taxonomic scope" value="Eukaryota"/>
</dbReference>
<dbReference type="eggNOG" id="KOG4258">
    <property type="taxonomic scope" value="Eukaryota"/>
</dbReference>
<dbReference type="GeneTree" id="ENSGT00940000160437"/>
<dbReference type="HOGENOM" id="CLU_000288_166_0_1"/>
<dbReference type="InParanoid" id="P14616"/>
<dbReference type="OMA" id="IQRGHVY"/>
<dbReference type="OrthoDB" id="5809444at2759"/>
<dbReference type="PAN-GO" id="P14616">
    <property type="GO annotations" value="8 GO annotations based on evolutionary models"/>
</dbReference>
<dbReference type="PhylomeDB" id="P14616"/>
<dbReference type="TreeFam" id="TF351636"/>
<dbReference type="BRENDA" id="2.7.10.1">
    <property type="organism ID" value="2681"/>
</dbReference>
<dbReference type="PathwayCommons" id="P14616"/>
<dbReference type="SignaLink" id="P14616"/>
<dbReference type="BioGRID-ORCS" id="3645">
    <property type="hits" value="12 hits in 1175 CRISPR screens"/>
</dbReference>
<dbReference type="GeneWiki" id="INSRR"/>
<dbReference type="GenomeRNAi" id="3645"/>
<dbReference type="Pharos" id="P14616">
    <property type="development level" value="Tchem"/>
</dbReference>
<dbReference type="PRO" id="PR:P14616"/>
<dbReference type="Proteomes" id="UP000005640">
    <property type="component" value="Chromosome 1"/>
</dbReference>
<dbReference type="RNAct" id="P14616">
    <property type="molecule type" value="protein"/>
</dbReference>
<dbReference type="Bgee" id="ENSG00000027644">
    <property type="expression patterns" value="Expressed in adult mammalian kidney and 60 other cell types or tissues"/>
</dbReference>
<dbReference type="GO" id="GO:0030424">
    <property type="term" value="C:axon"/>
    <property type="evidence" value="ECO:0000318"/>
    <property type="project" value="GO_Central"/>
</dbReference>
<dbReference type="GO" id="GO:0005899">
    <property type="term" value="C:insulin receptor complex"/>
    <property type="evidence" value="ECO:0000318"/>
    <property type="project" value="GO_Central"/>
</dbReference>
<dbReference type="GO" id="GO:0005886">
    <property type="term" value="C:plasma membrane"/>
    <property type="evidence" value="ECO:0000318"/>
    <property type="project" value="GO_Central"/>
</dbReference>
<dbReference type="GO" id="GO:0043235">
    <property type="term" value="C:receptor complex"/>
    <property type="evidence" value="ECO:0000314"/>
    <property type="project" value="MGI"/>
</dbReference>
<dbReference type="GO" id="GO:0005524">
    <property type="term" value="F:ATP binding"/>
    <property type="evidence" value="ECO:0007669"/>
    <property type="project" value="UniProtKB-KW"/>
</dbReference>
<dbReference type="GO" id="GO:0005009">
    <property type="term" value="F:insulin receptor activity"/>
    <property type="evidence" value="ECO:0000318"/>
    <property type="project" value="GO_Central"/>
</dbReference>
<dbReference type="GO" id="GO:0043560">
    <property type="term" value="F:insulin receptor substrate binding"/>
    <property type="evidence" value="ECO:0000318"/>
    <property type="project" value="GO_Central"/>
</dbReference>
<dbReference type="GO" id="GO:0043548">
    <property type="term" value="F:phosphatidylinositol 3-kinase binding"/>
    <property type="evidence" value="ECO:0007669"/>
    <property type="project" value="InterPro"/>
</dbReference>
<dbReference type="GO" id="GO:0004714">
    <property type="term" value="F:transmembrane receptor protein tyrosine kinase activity"/>
    <property type="evidence" value="ECO:0000314"/>
    <property type="project" value="UniProtKB"/>
</dbReference>
<dbReference type="GO" id="GO:0030036">
    <property type="term" value="P:actin cytoskeleton organization"/>
    <property type="evidence" value="ECO:0000314"/>
    <property type="project" value="UniProtKB"/>
</dbReference>
<dbReference type="GO" id="GO:0007169">
    <property type="term" value="P:cell surface receptor protein tyrosine kinase signaling pathway"/>
    <property type="evidence" value="ECO:0000303"/>
    <property type="project" value="UniProtKB"/>
</dbReference>
<dbReference type="GO" id="GO:0071469">
    <property type="term" value="P:cellular response to alkaline pH"/>
    <property type="evidence" value="ECO:0000314"/>
    <property type="project" value="UniProtKB"/>
</dbReference>
<dbReference type="GO" id="GO:0008286">
    <property type="term" value="P:insulin receptor signaling pathway"/>
    <property type="evidence" value="ECO:0000318"/>
    <property type="project" value="GO_Central"/>
</dbReference>
<dbReference type="GO" id="GO:0030238">
    <property type="term" value="P:male sex determination"/>
    <property type="evidence" value="ECO:0007669"/>
    <property type="project" value="Ensembl"/>
</dbReference>
<dbReference type="GO" id="GO:0046777">
    <property type="term" value="P:protein autophosphorylation"/>
    <property type="evidence" value="ECO:0000315"/>
    <property type="project" value="UniProtKB"/>
</dbReference>
<dbReference type="CDD" id="cd00063">
    <property type="entry name" value="FN3"/>
    <property type="match status" value="3"/>
</dbReference>
<dbReference type="CDD" id="cd00064">
    <property type="entry name" value="FU"/>
    <property type="match status" value="1"/>
</dbReference>
<dbReference type="CDD" id="cd05032">
    <property type="entry name" value="PTKc_InsR_like"/>
    <property type="match status" value="1"/>
</dbReference>
<dbReference type="FunFam" id="1.10.510.10:FF:000050">
    <property type="entry name" value="Tyrosine-protein kinase receptor"/>
    <property type="match status" value="1"/>
</dbReference>
<dbReference type="FunFam" id="2.10.220.10:FF:000014">
    <property type="entry name" value="Tyrosine-protein kinase receptor"/>
    <property type="match status" value="1"/>
</dbReference>
<dbReference type="FunFam" id="2.60.40.10:FF:000087">
    <property type="entry name" value="Tyrosine-protein kinase receptor"/>
    <property type="match status" value="1"/>
</dbReference>
<dbReference type="FunFam" id="2.60.40.10:FF:000108">
    <property type="entry name" value="Tyrosine-protein kinase receptor"/>
    <property type="match status" value="1"/>
</dbReference>
<dbReference type="FunFam" id="2.60.40.10:FF:001636">
    <property type="entry name" value="Tyrosine-protein kinase receptor"/>
    <property type="match status" value="1"/>
</dbReference>
<dbReference type="FunFam" id="3.30.200.20:FF:000026">
    <property type="entry name" value="Tyrosine-protein kinase receptor"/>
    <property type="match status" value="1"/>
</dbReference>
<dbReference type="FunFam" id="3.80.20.20:FF:000001">
    <property type="entry name" value="Tyrosine-protein kinase receptor"/>
    <property type="match status" value="1"/>
</dbReference>
<dbReference type="FunFam" id="3.80.20.20:FF:000002">
    <property type="entry name" value="Tyrosine-protein kinase receptor"/>
    <property type="match status" value="1"/>
</dbReference>
<dbReference type="Gene3D" id="2.10.220.10">
    <property type="entry name" value="Hormone Receptor, Insulin-like Growth Factor Receptor 1, Chain A, domain 2"/>
    <property type="match status" value="1"/>
</dbReference>
<dbReference type="Gene3D" id="2.60.40.10">
    <property type="entry name" value="Immunoglobulins"/>
    <property type="match status" value="4"/>
</dbReference>
<dbReference type="Gene3D" id="3.30.200.20">
    <property type="entry name" value="Phosphorylase Kinase, domain 1"/>
    <property type="match status" value="1"/>
</dbReference>
<dbReference type="Gene3D" id="3.80.20.20">
    <property type="entry name" value="Receptor L-domain"/>
    <property type="match status" value="2"/>
</dbReference>
<dbReference type="Gene3D" id="1.10.510.10">
    <property type="entry name" value="Transferase(Phosphotransferase) domain 1"/>
    <property type="match status" value="1"/>
</dbReference>
<dbReference type="InterPro" id="IPR003961">
    <property type="entry name" value="FN3_dom"/>
</dbReference>
<dbReference type="InterPro" id="IPR036116">
    <property type="entry name" value="FN3_sf"/>
</dbReference>
<dbReference type="InterPro" id="IPR006211">
    <property type="entry name" value="Furin-like_Cys-rich_dom"/>
</dbReference>
<dbReference type="InterPro" id="IPR006212">
    <property type="entry name" value="Furin_repeat"/>
</dbReference>
<dbReference type="InterPro" id="IPR009030">
    <property type="entry name" value="Growth_fac_rcpt_cys_sf"/>
</dbReference>
<dbReference type="InterPro" id="IPR013783">
    <property type="entry name" value="Ig-like_fold"/>
</dbReference>
<dbReference type="InterPro" id="IPR011009">
    <property type="entry name" value="Kinase-like_dom_sf"/>
</dbReference>
<dbReference type="InterPro" id="IPR000719">
    <property type="entry name" value="Prot_kinase_dom"/>
</dbReference>
<dbReference type="InterPro" id="IPR017441">
    <property type="entry name" value="Protein_kinase_ATP_BS"/>
</dbReference>
<dbReference type="InterPro" id="IPR000494">
    <property type="entry name" value="Rcpt_L-dom"/>
</dbReference>
<dbReference type="InterPro" id="IPR036941">
    <property type="entry name" value="Rcpt_L-dom_sf"/>
</dbReference>
<dbReference type="InterPro" id="IPR050122">
    <property type="entry name" value="RTK"/>
</dbReference>
<dbReference type="InterPro" id="IPR001245">
    <property type="entry name" value="Ser-Thr/Tyr_kinase_cat_dom"/>
</dbReference>
<dbReference type="InterPro" id="IPR008266">
    <property type="entry name" value="Tyr_kinase_AS"/>
</dbReference>
<dbReference type="InterPro" id="IPR020635">
    <property type="entry name" value="Tyr_kinase_cat_dom"/>
</dbReference>
<dbReference type="InterPro" id="IPR016246">
    <property type="entry name" value="Tyr_kinase_insulin-like_rcpt"/>
</dbReference>
<dbReference type="InterPro" id="IPR002011">
    <property type="entry name" value="Tyr_kinase_rcpt_2_CS"/>
</dbReference>
<dbReference type="PANTHER" id="PTHR24416:SF338">
    <property type="entry name" value="INSULIN RECEPTOR-RELATED PROTEIN"/>
    <property type="match status" value="1"/>
</dbReference>
<dbReference type="PANTHER" id="PTHR24416">
    <property type="entry name" value="TYROSINE-PROTEIN KINASE RECEPTOR"/>
    <property type="match status" value="1"/>
</dbReference>
<dbReference type="Pfam" id="PF00041">
    <property type="entry name" value="fn3"/>
    <property type="match status" value="1"/>
</dbReference>
<dbReference type="Pfam" id="PF00757">
    <property type="entry name" value="Furin-like"/>
    <property type="match status" value="1"/>
</dbReference>
<dbReference type="Pfam" id="PF07714">
    <property type="entry name" value="PK_Tyr_Ser-Thr"/>
    <property type="match status" value="1"/>
</dbReference>
<dbReference type="Pfam" id="PF01030">
    <property type="entry name" value="Recep_L_domain"/>
    <property type="match status" value="2"/>
</dbReference>
<dbReference type="PIRSF" id="PIRSF000620">
    <property type="entry name" value="Insulin_receptor"/>
    <property type="match status" value="1"/>
</dbReference>
<dbReference type="PRINTS" id="PR00109">
    <property type="entry name" value="TYRKINASE"/>
</dbReference>
<dbReference type="SMART" id="SM00060">
    <property type="entry name" value="FN3"/>
    <property type="match status" value="3"/>
</dbReference>
<dbReference type="SMART" id="SM00261">
    <property type="entry name" value="FU"/>
    <property type="match status" value="1"/>
</dbReference>
<dbReference type="SMART" id="SM00219">
    <property type="entry name" value="TyrKc"/>
    <property type="match status" value="1"/>
</dbReference>
<dbReference type="SUPFAM" id="SSF49265">
    <property type="entry name" value="Fibronectin type III"/>
    <property type="match status" value="3"/>
</dbReference>
<dbReference type="SUPFAM" id="SSF57184">
    <property type="entry name" value="Growth factor receptor domain"/>
    <property type="match status" value="1"/>
</dbReference>
<dbReference type="SUPFAM" id="SSF52058">
    <property type="entry name" value="L domain-like"/>
    <property type="match status" value="2"/>
</dbReference>
<dbReference type="SUPFAM" id="SSF56112">
    <property type="entry name" value="Protein kinase-like (PK-like)"/>
    <property type="match status" value="1"/>
</dbReference>
<dbReference type="PROSITE" id="PS50853">
    <property type="entry name" value="FN3"/>
    <property type="match status" value="3"/>
</dbReference>
<dbReference type="PROSITE" id="PS00107">
    <property type="entry name" value="PROTEIN_KINASE_ATP"/>
    <property type="match status" value="1"/>
</dbReference>
<dbReference type="PROSITE" id="PS50011">
    <property type="entry name" value="PROTEIN_KINASE_DOM"/>
    <property type="match status" value="1"/>
</dbReference>
<dbReference type="PROSITE" id="PS00109">
    <property type="entry name" value="PROTEIN_KINASE_TYR"/>
    <property type="match status" value="1"/>
</dbReference>
<dbReference type="PROSITE" id="PS00239">
    <property type="entry name" value="RECEPTOR_TYR_KIN_II"/>
    <property type="match status" value="1"/>
</dbReference>